<dbReference type="EMBL" id="Z46787">
    <property type="protein sequence ID" value="CAA86739.2"/>
    <property type="molecule type" value="Genomic_DNA"/>
</dbReference>
<dbReference type="PIR" id="T19322">
    <property type="entry name" value="T19322"/>
</dbReference>
<dbReference type="RefSeq" id="NP_497836.2">
    <property type="nucleotide sequence ID" value="NM_065435.4"/>
</dbReference>
<dbReference type="SMR" id="Q09461"/>
<dbReference type="FunCoup" id="Q09461">
    <property type="interactions" value="1883"/>
</dbReference>
<dbReference type="STRING" id="6239.C16C10.1.1"/>
<dbReference type="PaxDb" id="6239-C16C10.1"/>
<dbReference type="PeptideAtlas" id="Q09461"/>
<dbReference type="EnsemblMetazoa" id="C16C10.1.1">
    <property type="protein sequence ID" value="C16C10.1.1"/>
    <property type="gene ID" value="WBGene00007622"/>
</dbReference>
<dbReference type="GeneID" id="175537"/>
<dbReference type="KEGG" id="cel:CELE_C16C10.1"/>
<dbReference type="UCSC" id="C16C10.1.2">
    <property type="organism name" value="c. elegans"/>
</dbReference>
<dbReference type="AGR" id="WB:WBGene00007622"/>
<dbReference type="CTD" id="175537"/>
<dbReference type="WormBase" id="C16C10.1">
    <property type="protein sequence ID" value="CE33519"/>
    <property type="gene ID" value="WBGene00007622"/>
</dbReference>
<dbReference type="eggNOG" id="KOG0761">
    <property type="taxonomic scope" value="Eukaryota"/>
</dbReference>
<dbReference type="GeneTree" id="ENSGT00940000167433"/>
<dbReference type="HOGENOM" id="CLU_015166_0_0_1"/>
<dbReference type="InParanoid" id="Q09461"/>
<dbReference type="OMA" id="YWWGYES"/>
<dbReference type="OrthoDB" id="1747031at2759"/>
<dbReference type="PhylomeDB" id="Q09461"/>
<dbReference type="PRO" id="PR:Q09461"/>
<dbReference type="Proteomes" id="UP000001940">
    <property type="component" value="Chromosome III"/>
</dbReference>
<dbReference type="Bgee" id="WBGene00007622">
    <property type="expression patterns" value="Expressed in germ line (C elegans) and 4 other cell types or tissues"/>
</dbReference>
<dbReference type="GO" id="GO:0005743">
    <property type="term" value="C:mitochondrial inner membrane"/>
    <property type="evidence" value="ECO:0007669"/>
    <property type="project" value="UniProtKB-SubCell"/>
</dbReference>
<dbReference type="GO" id="GO:0005739">
    <property type="term" value="C:mitochondrion"/>
    <property type="evidence" value="ECO:0000318"/>
    <property type="project" value="GO_Central"/>
</dbReference>
<dbReference type="GO" id="GO:0170036">
    <property type="term" value="P:import into the mitochondrion"/>
    <property type="evidence" value="ECO:0000318"/>
    <property type="project" value="GO_Central"/>
</dbReference>
<dbReference type="Gene3D" id="1.50.40.10">
    <property type="entry name" value="Mitochondrial carrier domain"/>
    <property type="match status" value="1"/>
</dbReference>
<dbReference type="InterPro" id="IPR018108">
    <property type="entry name" value="Mitochondrial_sb/sol_carrier"/>
</dbReference>
<dbReference type="InterPro" id="IPR023395">
    <property type="entry name" value="Mt_carrier_dom_sf"/>
</dbReference>
<dbReference type="InterPro" id="IPR045315">
    <property type="entry name" value="Mtm1-like"/>
</dbReference>
<dbReference type="PANTHER" id="PTHR45760">
    <property type="entry name" value="FI19922P1-RELATED"/>
    <property type="match status" value="1"/>
</dbReference>
<dbReference type="PANTHER" id="PTHR45760:SF2">
    <property type="entry name" value="FI19922P1-RELATED"/>
    <property type="match status" value="1"/>
</dbReference>
<dbReference type="Pfam" id="PF00153">
    <property type="entry name" value="Mito_carr"/>
    <property type="match status" value="3"/>
</dbReference>
<dbReference type="SUPFAM" id="SSF103506">
    <property type="entry name" value="Mitochondrial carrier"/>
    <property type="match status" value="1"/>
</dbReference>
<dbReference type="PROSITE" id="PS50920">
    <property type="entry name" value="SOLCAR"/>
    <property type="match status" value="3"/>
</dbReference>
<organism>
    <name type="scientific">Caenorhabditis elegans</name>
    <dbReference type="NCBI Taxonomy" id="6239"/>
    <lineage>
        <taxon>Eukaryota</taxon>
        <taxon>Metazoa</taxon>
        <taxon>Ecdysozoa</taxon>
        <taxon>Nematoda</taxon>
        <taxon>Chromadorea</taxon>
        <taxon>Rhabditida</taxon>
        <taxon>Rhabditina</taxon>
        <taxon>Rhabditomorpha</taxon>
        <taxon>Rhabditoidea</taxon>
        <taxon>Rhabditidae</taxon>
        <taxon>Peloderinae</taxon>
        <taxon>Caenorhabditis</taxon>
    </lineage>
</organism>
<name>YQ51_CAEEL</name>
<keyword id="KW-0472">Membrane</keyword>
<keyword id="KW-0496">Mitochondrion</keyword>
<keyword id="KW-0999">Mitochondrion inner membrane</keyword>
<keyword id="KW-1185">Reference proteome</keyword>
<keyword id="KW-0677">Repeat</keyword>
<keyword id="KW-0812">Transmembrane</keyword>
<keyword id="KW-1133">Transmembrane helix</keyword>
<keyword id="KW-0813">Transport</keyword>
<accession>Q09461</accession>
<evidence type="ECO:0000255" key="1"/>
<evidence type="ECO:0000305" key="2"/>
<reference key="1">
    <citation type="journal article" date="1998" name="Science">
        <title>Genome sequence of the nematode C. elegans: a platform for investigating biology.</title>
        <authorList>
            <consortium name="The C. elegans sequencing consortium"/>
        </authorList>
    </citation>
    <scope>NUCLEOTIDE SEQUENCE [LARGE SCALE GENOMIC DNA]</scope>
    <source>
        <strain>Bristol N2</strain>
    </source>
</reference>
<gene>
    <name type="ORF">C16C10.1</name>
</gene>
<feature type="chain" id="PRO_0000090704" description="Uncharacterized mitochondrial carrier C16C10.1">
    <location>
        <begin position="1"/>
        <end position="360"/>
    </location>
</feature>
<feature type="transmembrane region" description="Helical; Name=1" evidence="1">
    <location>
        <begin position="40"/>
        <end position="60"/>
    </location>
</feature>
<feature type="transmembrane region" description="Helical; Name=2" evidence="1">
    <location>
        <begin position="125"/>
        <end position="145"/>
    </location>
</feature>
<feature type="transmembrane region" description="Helical; Name=3" evidence="1">
    <location>
        <begin position="178"/>
        <end position="198"/>
    </location>
</feature>
<feature type="transmembrane region" description="Helical; Name=4" evidence="1">
    <location>
        <begin position="225"/>
        <end position="247"/>
    </location>
</feature>
<feature type="transmembrane region" description="Helical; Name=5" evidence="1">
    <location>
        <begin position="269"/>
        <end position="289"/>
    </location>
</feature>
<feature type="transmembrane region" description="Helical; Name=6" evidence="1">
    <location>
        <begin position="327"/>
        <end position="348"/>
    </location>
</feature>
<feature type="repeat" description="Solcar 1">
    <location>
        <begin position="34"/>
        <end position="153"/>
    </location>
</feature>
<feature type="repeat" description="Solcar 2">
    <location>
        <begin position="172"/>
        <end position="256"/>
    </location>
</feature>
<feature type="repeat" description="Solcar 3">
    <location>
        <begin position="266"/>
        <end position="355"/>
    </location>
</feature>
<proteinExistence type="inferred from homology"/>
<comment type="subcellular location">
    <subcellularLocation>
        <location evidence="2">Mitochondrion inner membrane</location>
        <topology evidence="2">Multi-pass membrane protein</topology>
    </subcellularLocation>
</comment>
<comment type="similarity">
    <text evidence="2">Belongs to the mitochondrial carrier (TC 2.A.29) family.</text>
</comment>
<protein>
    <recommendedName>
        <fullName>Uncharacterized mitochondrial carrier C16C10.1</fullName>
    </recommendedName>
</protein>
<sequence>MPSPCESGKTTNCSGAPSSSCAKSVECCKKQLSVGVLQQVSASSSGAIVTSLFMTPLDVVKIRLQQQTRPFPKGECFYYHNGLMEHVCVSCEVRKPCEWYQRPGNFRGTADAIVKIARHEGIRSLWSGLSPTMVMALPATVFYFTTYDNLSVWLKKKMCCRRAFSPEKWTPPDWSAAAVAGIVARTIAVTVVSPIEMIRTKMQSKRLTYHEIGHLVRSSMATKGISSFYLGWTPTMLRDIPFSGIYWAGYDLFKTNLQRRQGPDHNPFVVSFVSGAAAGVVASIFTHPFDVIKTNCQIRIGGSIDDMNKSITTVIKDMYHSRGISAFSSGLVPRLVKVSPSCAIMISFYEYFKFLFQKNH</sequence>